<reference key="1">
    <citation type="submission" date="2006-01" db="EMBL/GenBank/DDBJ databases">
        <title>Complete sequence of Rhodopseudomonas palustris HaA2.</title>
        <authorList>
            <consortium name="US DOE Joint Genome Institute"/>
            <person name="Copeland A."/>
            <person name="Lucas S."/>
            <person name="Lapidus A."/>
            <person name="Barry K."/>
            <person name="Detter J.C."/>
            <person name="Glavina T."/>
            <person name="Hammon N."/>
            <person name="Israni S."/>
            <person name="Pitluck S."/>
            <person name="Chain P."/>
            <person name="Malfatti S."/>
            <person name="Shin M."/>
            <person name="Vergez L."/>
            <person name="Schmutz J."/>
            <person name="Larimer F."/>
            <person name="Land M."/>
            <person name="Hauser L."/>
            <person name="Pelletier D.A."/>
            <person name="Kyrpides N."/>
            <person name="Anderson I."/>
            <person name="Oda Y."/>
            <person name="Harwood C.S."/>
            <person name="Richardson P."/>
        </authorList>
    </citation>
    <scope>NUCLEOTIDE SEQUENCE [LARGE SCALE GENOMIC DNA]</scope>
    <source>
        <strain>HaA2</strain>
    </source>
</reference>
<accession>Q2IRA3</accession>
<protein>
    <recommendedName>
        <fullName evidence="1">ATP synthase subunit b 1</fullName>
    </recommendedName>
    <alternativeName>
        <fullName evidence="1">ATP synthase F(0) sector subunit b 1</fullName>
    </alternativeName>
    <alternativeName>
        <fullName evidence="1">ATPase subunit I 1</fullName>
    </alternativeName>
    <alternativeName>
        <fullName evidence="1">F-type ATPase subunit b 1</fullName>
        <shortName evidence="1">F-ATPase subunit b 1</shortName>
    </alternativeName>
</protein>
<evidence type="ECO:0000255" key="1">
    <source>
        <dbReference type="HAMAP-Rule" id="MF_01398"/>
    </source>
</evidence>
<gene>
    <name evidence="1" type="primary">atpF1</name>
    <name type="ordered locus">RPB_4574</name>
</gene>
<feature type="chain" id="PRO_0000368724" description="ATP synthase subunit b 1">
    <location>
        <begin position="1"/>
        <end position="163"/>
    </location>
</feature>
<feature type="transmembrane region" description="Helical" evidence="1">
    <location>
        <begin position="7"/>
        <end position="27"/>
    </location>
</feature>
<name>ATPF1_RHOP2</name>
<sequence length="163" mass="17588">MAIFAEAETWVAIAFVILMGIFAYLGVHRTVLKALDNRRDRIKAELDEARKLKDEAAKLLADYRARRAQAEREAEAIVASAKADAERIAAESKAKLEDFVVRRTKTAESKIALAEAQALADVRAAAAEAAVSAAAIVLSQSVKGQVADDLLGKGIQEVRSKLN</sequence>
<comment type="function">
    <text evidence="1">F(1)F(0) ATP synthase produces ATP from ADP in the presence of a proton or sodium gradient. F-type ATPases consist of two structural domains, F(1) containing the extramembraneous catalytic core and F(0) containing the membrane proton channel, linked together by a central stalk and a peripheral stalk. During catalysis, ATP synthesis in the catalytic domain of F(1) is coupled via a rotary mechanism of the central stalk subunits to proton translocation.</text>
</comment>
<comment type="function">
    <text evidence="1">Component of the F(0) channel, it forms part of the peripheral stalk, linking F(1) to F(0).</text>
</comment>
<comment type="subunit">
    <text evidence="1">F-type ATPases have 2 components, F(1) - the catalytic core - and F(0) - the membrane proton channel. F(1) has five subunits: alpha(3), beta(3), gamma(1), delta(1), epsilon(1). F(0) has three main subunits: a(1), b(2) and c(10-14). The alpha and beta chains form an alternating ring which encloses part of the gamma chain. F(1) is attached to F(0) by a central stalk formed by the gamma and epsilon chains, while a peripheral stalk is formed by the delta and b chains.</text>
</comment>
<comment type="subcellular location">
    <subcellularLocation>
        <location evidence="1">Cell inner membrane</location>
        <topology evidence="1">Single-pass membrane protein</topology>
    </subcellularLocation>
</comment>
<comment type="similarity">
    <text evidence="1">Belongs to the ATPase B chain family.</text>
</comment>
<dbReference type="EMBL" id="CP000250">
    <property type="protein sequence ID" value="ABD09257.1"/>
    <property type="molecule type" value="Genomic_DNA"/>
</dbReference>
<dbReference type="RefSeq" id="WP_011443439.1">
    <property type="nucleotide sequence ID" value="NC_007778.1"/>
</dbReference>
<dbReference type="SMR" id="Q2IRA3"/>
<dbReference type="STRING" id="316058.RPB_4574"/>
<dbReference type="KEGG" id="rpb:RPB_4574"/>
<dbReference type="eggNOG" id="COG0711">
    <property type="taxonomic scope" value="Bacteria"/>
</dbReference>
<dbReference type="HOGENOM" id="CLU_079215_6_1_5"/>
<dbReference type="OrthoDB" id="8479836at2"/>
<dbReference type="Proteomes" id="UP000008809">
    <property type="component" value="Chromosome"/>
</dbReference>
<dbReference type="GO" id="GO:0005886">
    <property type="term" value="C:plasma membrane"/>
    <property type="evidence" value="ECO:0007669"/>
    <property type="project" value="UniProtKB-SubCell"/>
</dbReference>
<dbReference type="GO" id="GO:0045259">
    <property type="term" value="C:proton-transporting ATP synthase complex"/>
    <property type="evidence" value="ECO:0007669"/>
    <property type="project" value="UniProtKB-KW"/>
</dbReference>
<dbReference type="GO" id="GO:0046933">
    <property type="term" value="F:proton-transporting ATP synthase activity, rotational mechanism"/>
    <property type="evidence" value="ECO:0007669"/>
    <property type="project" value="UniProtKB-UniRule"/>
</dbReference>
<dbReference type="GO" id="GO:0046961">
    <property type="term" value="F:proton-transporting ATPase activity, rotational mechanism"/>
    <property type="evidence" value="ECO:0007669"/>
    <property type="project" value="TreeGrafter"/>
</dbReference>
<dbReference type="CDD" id="cd06503">
    <property type="entry name" value="ATP-synt_Fo_b"/>
    <property type="match status" value="1"/>
</dbReference>
<dbReference type="HAMAP" id="MF_01398">
    <property type="entry name" value="ATP_synth_b_bprime"/>
    <property type="match status" value="1"/>
</dbReference>
<dbReference type="InterPro" id="IPR002146">
    <property type="entry name" value="ATP_synth_b/b'su_bac/chlpt"/>
</dbReference>
<dbReference type="InterPro" id="IPR050059">
    <property type="entry name" value="ATP_synthase_B_chain"/>
</dbReference>
<dbReference type="PANTHER" id="PTHR33445:SF1">
    <property type="entry name" value="ATP SYNTHASE SUBUNIT B"/>
    <property type="match status" value="1"/>
</dbReference>
<dbReference type="PANTHER" id="PTHR33445">
    <property type="entry name" value="ATP SYNTHASE SUBUNIT B', CHLOROPLASTIC"/>
    <property type="match status" value="1"/>
</dbReference>
<dbReference type="Pfam" id="PF00430">
    <property type="entry name" value="ATP-synt_B"/>
    <property type="match status" value="1"/>
</dbReference>
<organism>
    <name type="scientific">Rhodopseudomonas palustris (strain HaA2)</name>
    <dbReference type="NCBI Taxonomy" id="316058"/>
    <lineage>
        <taxon>Bacteria</taxon>
        <taxon>Pseudomonadati</taxon>
        <taxon>Pseudomonadota</taxon>
        <taxon>Alphaproteobacteria</taxon>
        <taxon>Hyphomicrobiales</taxon>
        <taxon>Nitrobacteraceae</taxon>
        <taxon>Rhodopseudomonas</taxon>
    </lineage>
</organism>
<proteinExistence type="inferred from homology"/>
<keyword id="KW-0066">ATP synthesis</keyword>
<keyword id="KW-0997">Cell inner membrane</keyword>
<keyword id="KW-1003">Cell membrane</keyword>
<keyword id="KW-0138">CF(0)</keyword>
<keyword id="KW-0375">Hydrogen ion transport</keyword>
<keyword id="KW-0406">Ion transport</keyword>
<keyword id="KW-0472">Membrane</keyword>
<keyword id="KW-1185">Reference proteome</keyword>
<keyword id="KW-0812">Transmembrane</keyword>
<keyword id="KW-1133">Transmembrane helix</keyword>
<keyword id="KW-0813">Transport</keyword>